<proteinExistence type="inferred from homology"/>
<gene>
    <name evidence="1" type="primary">fieF</name>
    <name type="ordered locus">CKO_03086</name>
</gene>
<dbReference type="EMBL" id="CP000822">
    <property type="protein sequence ID" value="ABV14177.1"/>
    <property type="molecule type" value="Genomic_DNA"/>
</dbReference>
<dbReference type="RefSeq" id="WP_012133884.1">
    <property type="nucleotide sequence ID" value="NC_009792.1"/>
</dbReference>
<dbReference type="SMR" id="A8AL14"/>
<dbReference type="STRING" id="290338.CKO_03086"/>
<dbReference type="GeneID" id="45136886"/>
<dbReference type="KEGG" id="cko:CKO_03086"/>
<dbReference type="HOGENOM" id="CLU_013430_3_0_6"/>
<dbReference type="OrthoDB" id="9806522at2"/>
<dbReference type="Proteomes" id="UP000008148">
    <property type="component" value="Chromosome"/>
</dbReference>
<dbReference type="GO" id="GO:0005886">
    <property type="term" value="C:plasma membrane"/>
    <property type="evidence" value="ECO:0007669"/>
    <property type="project" value="UniProtKB-SubCell"/>
</dbReference>
<dbReference type="GO" id="GO:0015086">
    <property type="term" value="F:cadmium ion transmembrane transporter activity"/>
    <property type="evidence" value="ECO:0007669"/>
    <property type="project" value="UniProtKB-UniRule"/>
</dbReference>
<dbReference type="GO" id="GO:0015093">
    <property type="term" value="F:ferrous iron transmembrane transporter activity"/>
    <property type="evidence" value="ECO:0007669"/>
    <property type="project" value="TreeGrafter"/>
</dbReference>
<dbReference type="GO" id="GO:0046872">
    <property type="term" value="F:metal ion binding"/>
    <property type="evidence" value="ECO:0007669"/>
    <property type="project" value="UniProtKB-KW"/>
</dbReference>
<dbReference type="GO" id="GO:0015341">
    <property type="term" value="F:zinc efflux antiporter activity"/>
    <property type="evidence" value="ECO:0007669"/>
    <property type="project" value="TreeGrafter"/>
</dbReference>
<dbReference type="GO" id="GO:0006882">
    <property type="term" value="P:intracellular zinc ion homeostasis"/>
    <property type="evidence" value="ECO:0007669"/>
    <property type="project" value="TreeGrafter"/>
</dbReference>
<dbReference type="FunFam" id="1.20.1510.10:FF:000001">
    <property type="entry name" value="Ferrous-iron efflux pump FieF"/>
    <property type="match status" value="1"/>
</dbReference>
<dbReference type="FunFam" id="3.30.70.1350:FF:000002">
    <property type="entry name" value="Ferrous-iron efflux pump FieF"/>
    <property type="match status" value="1"/>
</dbReference>
<dbReference type="Gene3D" id="1.20.1510.10">
    <property type="entry name" value="Cation efflux protein transmembrane domain"/>
    <property type="match status" value="1"/>
</dbReference>
<dbReference type="Gene3D" id="3.30.70.1350">
    <property type="entry name" value="Cation efflux protein, cytoplasmic domain"/>
    <property type="match status" value="1"/>
</dbReference>
<dbReference type="HAMAP" id="MF_01425">
    <property type="entry name" value="Cation_efflux_FieF"/>
    <property type="match status" value="1"/>
</dbReference>
<dbReference type="InterPro" id="IPR002524">
    <property type="entry name" value="Cation_efflux"/>
</dbReference>
<dbReference type="InterPro" id="IPR027470">
    <property type="entry name" value="Cation_efflux_CTD"/>
</dbReference>
<dbReference type="InterPro" id="IPR036837">
    <property type="entry name" value="Cation_efflux_CTD_sf"/>
</dbReference>
<dbReference type="InterPro" id="IPR023783">
    <property type="entry name" value="Cation_efflux_FieF"/>
</dbReference>
<dbReference type="InterPro" id="IPR027469">
    <property type="entry name" value="Cation_efflux_TMD_sf"/>
</dbReference>
<dbReference type="InterPro" id="IPR050291">
    <property type="entry name" value="CDF_Transporter"/>
</dbReference>
<dbReference type="NCBIfam" id="TIGR01297">
    <property type="entry name" value="CDF"/>
    <property type="match status" value="1"/>
</dbReference>
<dbReference type="NCBIfam" id="NF007064">
    <property type="entry name" value="PRK09509.1"/>
    <property type="match status" value="1"/>
</dbReference>
<dbReference type="PANTHER" id="PTHR43840:SF41">
    <property type="entry name" value="CATION-EFFLUX PUMP FIEF"/>
    <property type="match status" value="1"/>
</dbReference>
<dbReference type="PANTHER" id="PTHR43840">
    <property type="entry name" value="MITOCHONDRIAL METAL TRANSPORTER 1-RELATED"/>
    <property type="match status" value="1"/>
</dbReference>
<dbReference type="Pfam" id="PF01545">
    <property type="entry name" value="Cation_efflux"/>
    <property type="match status" value="1"/>
</dbReference>
<dbReference type="Pfam" id="PF16916">
    <property type="entry name" value="ZT_dimer"/>
    <property type="match status" value="1"/>
</dbReference>
<dbReference type="SUPFAM" id="SSF160240">
    <property type="entry name" value="Cation efflux protein cytoplasmic domain-like"/>
    <property type="match status" value="1"/>
</dbReference>
<dbReference type="SUPFAM" id="SSF161111">
    <property type="entry name" value="Cation efflux protein transmembrane domain-like"/>
    <property type="match status" value="1"/>
</dbReference>
<name>FIEF_CITK8</name>
<feature type="chain" id="PRO_1000087419" description="Cation-efflux pump FieF">
    <location>
        <begin position="1"/>
        <end position="300"/>
    </location>
</feature>
<feature type="transmembrane region" description="Helical" evidence="1">
    <location>
        <begin position="12"/>
        <end position="32"/>
    </location>
</feature>
<feature type="transmembrane region" description="Helical" evidence="1">
    <location>
        <begin position="39"/>
        <end position="59"/>
    </location>
</feature>
<feature type="transmembrane region" description="Helical" evidence="1">
    <location>
        <begin position="82"/>
        <end position="102"/>
    </location>
</feature>
<feature type="transmembrane region" description="Helical" evidence="1">
    <location>
        <begin position="114"/>
        <end position="134"/>
    </location>
</feature>
<feature type="transmembrane region" description="Helical" evidence="1">
    <location>
        <begin position="164"/>
        <end position="184"/>
    </location>
</feature>
<feature type="binding site" evidence="1">
    <location>
        <position position="45"/>
    </location>
    <ligand>
        <name>Zn(2+)</name>
        <dbReference type="ChEBI" id="CHEBI:29105"/>
    </ligand>
</feature>
<feature type="binding site" evidence="1">
    <location>
        <position position="49"/>
    </location>
    <ligand>
        <name>Zn(2+)</name>
        <dbReference type="ChEBI" id="CHEBI:29105"/>
    </ligand>
</feature>
<feature type="binding site" evidence="1">
    <location>
        <position position="153"/>
    </location>
    <ligand>
        <name>Zn(2+)</name>
        <dbReference type="ChEBI" id="CHEBI:29105"/>
    </ligand>
</feature>
<feature type="binding site" evidence="1">
    <location>
        <position position="157"/>
    </location>
    <ligand>
        <name>Zn(2+)</name>
        <dbReference type="ChEBI" id="CHEBI:29105"/>
    </ligand>
</feature>
<sequence>MNQTYGRLVSRAAIAATVMASLLLLIKIFAWWYTGSVSILAALVDSLVDIAASLTNLLVVRYSLQPADDEHTFGHGKAESLAALAQSMFISGSALFLFLTGIQHLITPTPMNEPGVGIVVTLIALVCTIILVTFQRWVVRKTQSQAVRADMLHYQSDVMMNGAILVALGLAWYGWHRADALFALGIGIYILYSALRMGYEAVQSLLDRALPDEERQEIIDIVTSWPGVNGAHDLRTRQSGPTRFIQIHLEMEDNLPLVQAHLVAEQVEQAILRRFPGSDVIIHQDPCSVVPREGKRFELS</sequence>
<organism>
    <name type="scientific">Citrobacter koseri (strain ATCC BAA-895 / CDC 4225-83 / SGSC4696)</name>
    <dbReference type="NCBI Taxonomy" id="290338"/>
    <lineage>
        <taxon>Bacteria</taxon>
        <taxon>Pseudomonadati</taxon>
        <taxon>Pseudomonadota</taxon>
        <taxon>Gammaproteobacteria</taxon>
        <taxon>Enterobacterales</taxon>
        <taxon>Enterobacteriaceae</taxon>
        <taxon>Citrobacter</taxon>
    </lineage>
</organism>
<keyword id="KW-0997">Cell inner membrane</keyword>
<keyword id="KW-1003">Cell membrane</keyword>
<keyword id="KW-0406">Ion transport</keyword>
<keyword id="KW-0408">Iron</keyword>
<keyword id="KW-0410">Iron transport</keyword>
<keyword id="KW-0472">Membrane</keyword>
<keyword id="KW-0479">Metal-binding</keyword>
<keyword id="KW-1185">Reference proteome</keyword>
<keyword id="KW-0812">Transmembrane</keyword>
<keyword id="KW-1133">Transmembrane helix</keyword>
<keyword id="KW-0813">Transport</keyword>
<keyword id="KW-0862">Zinc</keyword>
<keyword id="KW-0864">Zinc transport</keyword>
<reference key="1">
    <citation type="submission" date="2007-08" db="EMBL/GenBank/DDBJ databases">
        <authorList>
            <consortium name="The Citrobacter koseri Genome Sequencing Project"/>
            <person name="McClelland M."/>
            <person name="Sanderson E.K."/>
            <person name="Porwollik S."/>
            <person name="Spieth J."/>
            <person name="Clifton W.S."/>
            <person name="Latreille P."/>
            <person name="Courtney L."/>
            <person name="Wang C."/>
            <person name="Pepin K."/>
            <person name="Bhonagiri V."/>
            <person name="Nash W."/>
            <person name="Johnson M."/>
            <person name="Thiruvilangam P."/>
            <person name="Wilson R."/>
        </authorList>
    </citation>
    <scope>NUCLEOTIDE SEQUENCE [LARGE SCALE GENOMIC DNA]</scope>
    <source>
        <strain>ATCC BAA-895 / CDC 4225-83 / SGSC4696</strain>
    </source>
</reference>
<protein>
    <recommendedName>
        <fullName evidence="1">Cation-efflux pump FieF</fullName>
    </recommendedName>
</protein>
<evidence type="ECO:0000255" key="1">
    <source>
        <dbReference type="HAMAP-Rule" id="MF_01425"/>
    </source>
</evidence>
<comment type="function">
    <text evidence="1">Divalent metal cation transporter which exports Zn(2+), Cd(2+) and possibly Fe(2+). May be involved in zinc and iron detoxification by efflux.</text>
</comment>
<comment type="catalytic activity">
    <reaction evidence="1">
        <text>Zn(2+)(in) + H(+)(out) = Zn(2+)(out) + H(+)(in)</text>
        <dbReference type="Rhea" id="RHEA:28839"/>
        <dbReference type="ChEBI" id="CHEBI:15378"/>
        <dbReference type="ChEBI" id="CHEBI:29105"/>
    </reaction>
</comment>
<comment type="catalytic activity">
    <reaction evidence="1">
        <text>Cd(2+)(in) + H(+)(out) = Cd(2+)(out) + H(+)(in)</text>
        <dbReference type="Rhea" id="RHEA:28739"/>
        <dbReference type="ChEBI" id="CHEBI:15378"/>
        <dbReference type="ChEBI" id="CHEBI:48775"/>
    </reaction>
</comment>
<comment type="catalytic activity">
    <reaction evidence="1">
        <text>Fe(2+)(in) + H(+)(out) = Fe(2+)(out) + H(+)(in)</text>
        <dbReference type="Rhea" id="RHEA:29439"/>
        <dbReference type="ChEBI" id="CHEBI:15378"/>
        <dbReference type="ChEBI" id="CHEBI:29033"/>
    </reaction>
</comment>
<comment type="subunit">
    <text evidence="1">Homodimer.</text>
</comment>
<comment type="subcellular location">
    <subcellularLocation>
        <location evidence="1">Cell inner membrane</location>
        <topology evidence="1">Multi-pass membrane protein</topology>
    </subcellularLocation>
</comment>
<comment type="similarity">
    <text evidence="1">Belongs to the cation diffusion facilitator (CDF) transporter (TC 2.A.4) family. FieF subfamily.</text>
</comment>
<accession>A8AL14</accession>